<comment type="function">
    <text evidence="1">An aminoacyl-tRNA editing enzyme that deacylates mischarged D-aminoacyl-tRNAs. Also deacylates mischarged glycyl-tRNA(Ala), protecting cells against glycine mischarging by AlaRS. Acts via tRNA-based rather than protein-based catalysis; rejects L-amino acids rather than detecting D-amino acids in the active site. By recycling D-aminoacyl-tRNA to D-amino acids and free tRNA molecules, this enzyme counteracts the toxicity associated with the formation of D-aminoacyl-tRNA entities in vivo and helps enforce protein L-homochirality.</text>
</comment>
<comment type="catalytic activity">
    <reaction evidence="1">
        <text>glycyl-tRNA(Ala) + H2O = tRNA(Ala) + glycine + H(+)</text>
        <dbReference type="Rhea" id="RHEA:53744"/>
        <dbReference type="Rhea" id="RHEA-COMP:9657"/>
        <dbReference type="Rhea" id="RHEA-COMP:13640"/>
        <dbReference type="ChEBI" id="CHEBI:15377"/>
        <dbReference type="ChEBI" id="CHEBI:15378"/>
        <dbReference type="ChEBI" id="CHEBI:57305"/>
        <dbReference type="ChEBI" id="CHEBI:78442"/>
        <dbReference type="ChEBI" id="CHEBI:78522"/>
        <dbReference type="EC" id="3.1.1.96"/>
    </reaction>
</comment>
<comment type="catalytic activity">
    <reaction evidence="1">
        <text>a D-aminoacyl-tRNA + H2O = a tRNA + a D-alpha-amino acid + H(+)</text>
        <dbReference type="Rhea" id="RHEA:13953"/>
        <dbReference type="Rhea" id="RHEA-COMP:10123"/>
        <dbReference type="Rhea" id="RHEA-COMP:10124"/>
        <dbReference type="ChEBI" id="CHEBI:15377"/>
        <dbReference type="ChEBI" id="CHEBI:15378"/>
        <dbReference type="ChEBI" id="CHEBI:59871"/>
        <dbReference type="ChEBI" id="CHEBI:78442"/>
        <dbReference type="ChEBI" id="CHEBI:79333"/>
        <dbReference type="EC" id="3.1.1.96"/>
    </reaction>
</comment>
<comment type="subunit">
    <text evidence="1">Homodimer.</text>
</comment>
<comment type="subcellular location">
    <subcellularLocation>
        <location evidence="1">Cytoplasm</location>
    </subcellularLocation>
</comment>
<comment type="domain">
    <text evidence="1">A Gly-cisPro motif from one monomer fits into the active site of the other monomer to allow specific chiral rejection of L-amino acids.</text>
</comment>
<comment type="similarity">
    <text evidence="1">Belongs to the DTD family.</text>
</comment>
<accession>B7UNK4</accession>
<gene>
    <name evidence="1" type="primary">dtd</name>
    <name type="ordered locus">E2348C_4188</name>
</gene>
<keyword id="KW-0963">Cytoplasm</keyword>
<keyword id="KW-0378">Hydrolase</keyword>
<keyword id="KW-1185">Reference proteome</keyword>
<keyword id="KW-0694">RNA-binding</keyword>
<keyword id="KW-0820">tRNA-binding</keyword>
<protein>
    <recommendedName>
        <fullName evidence="1">D-aminoacyl-tRNA deacylase</fullName>
        <shortName evidence="1">DTD</shortName>
        <ecNumber evidence="1">3.1.1.96</ecNumber>
    </recommendedName>
    <alternativeName>
        <fullName evidence="1">Gly-tRNA(Ala) deacylase</fullName>
    </alternativeName>
</protein>
<dbReference type="EC" id="3.1.1.96" evidence="1"/>
<dbReference type="EMBL" id="FM180568">
    <property type="protein sequence ID" value="CAS11736.1"/>
    <property type="molecule type" value="Genomic_DNA"/>
</dbReference>
<dbReference type="RefSeq" id="WP_000560983.1">
    <property type="nucleotide sequence ID" value="NC_011601.1"/>
</dbReference>
<dbReference type="SMR" id="B7UNK4"/>
<dbReference type="GeneID" id="93778051"/>
<dbReference type="KEGG" id="ecg:E2348C_4188"/>
<dbReference type="HOGENOM" id="CLU_076901_1_0_6"/>
<dbReference type="Proteomes" id="UP000008205">
    <property type="component" value="Chromosome"/>
</dbReference>
<dbReference type="GO" id="GO:0005737">
    <property type="term" value="C:cytoplasm"/>
    <property type="evidence" value="ECO:0007669"/>
    <property type="project" value="UniProtKB-SubCell"/>
</dbReference>
<dbReference type="GO" id="GO:0051500">
    <property type="term" value="F:D-tyrosyl-tRNA(Tyr) deacylase activity"/>
    <property type="evidence" value="ECO:0007669"/>
    <property type="project" value="TreeGrafter"/>
</dbReference>
<dbReference type="GO" id="GO:0106026">
    <property type="term" value="F:Gly-tRNA(Ala) deacylase activity"/>
    <property type="evidence" value="ECO:0007669"/>
    <property type="project" value="UniProtKB-UniRule"/>
</dbReference>
<dbReference type="GO" id="GO:0043908">
    <property type="term" value="F:Ser(Gly)-tRNA(Ala) hydrolase activity"/>
    <property type="evidence" value="ECO:0007669"/>
    <property type="project" value="UniProtKB-UniRule"/>
</dbReference>
<dbReference type="GO" id="GO:0000049">
    <property type="term" value="F:tRNA binding"/>
    <property type="evidence" value="ECO:0007669"/>
    <property type="project" value="UniProtKB-UniRule"/>
</dbReference>
<dbReference type="GO" id="GO:0019478">
    <property type="term" value="P:D-amino acid catabolic process"/>
    <property type="evidence" value="ECO:0007669"/>
    <property type="project" value="UniProtKB-UniRule"/>
</dbReference>
<dbReference type="CDD" id="cd00563">
    <property type="entry name" value="Dtyr_deacylase"/>
    <property type="match status" value="1"/>
</dbReference>
<dbReference type="FunFam" id="3.50.80.10:FF:000001">
    <property type="entry name" value="D-aminoacyl-tRNA deacylase"/>
    <property type="match status" value="1"/>
</dbReference>
<dbReference type="Gene3D" id="3.50.80.10">
    <property type="entry name" value="D-tyrosyl-tRNA(Tyr) deacylase"/>
    <property type="match status" value="1"/>
</dbReference>
<dbReference type="HAMAP" id="MF_00518">
    <property type="entry name" value="Deacylase_Dtd"/>
    <property type="match status" value="1"/>
</dbReference>
<dbReference type="InterPro" id="IPR003732">
    <property type="entry name" value="Daa-tRNA_deacyls_DTD"/>
</dbReference>
<dbReference type="InterPro" id="IPR023509">
    <property type="entry name" value="DTD-like_sf"/>
</dbReference>
<dbReference type="NCBIfam" id="TIGR00256">
    <property type="entry name" value="D-aminoacyl-tRNA deacylase"/>
    <property type="match status" value="1"/>
</dbReference>
<dbReference type="PANTHER" id="PTHR10472:SF5">
    <property type="entry name" value="D-AMINOACYL-TRNA DEACYLASE 1"/>
    <property type="match status" value="1"/>
</dbReference>
<dbReference type="PANTHER" id="PTHR10472">
    <property type="entry name" value="D-TYROSYL-TRNA TYR DEACYLASE"/>
    <property type="match status" value="1"/>
</dbReference>
<dbReference type="Pfam" id="PF02580">
    <property type="entry name" value="Tyr_Deacylase"/>
    <property type="match status" value="1"/>
</dbReference>
<dbReference type="SUPFAM" id="SSF69500">
    <property type="entry name" value="DTD-like"/>
    <property type="match status" value="1"/>
</dbReference>
<name>DTD_ECO27</name>
<proteinExistence type="inferred from homology"/>
<evidence type="ECO:0000255" key="1">
    <source>
        <dbReference type="HAMAP-Rule" id="MF_00518"/>
    </source>
</evidence>
<organism>
    <name type="scientific">Escherichia coli O127:H6 (strain E2348/69 / EPEC)</name>
    <dbReference type="NCBI Taxonomy" id="574521"/>
    <lineage>
        <taxon>Bacteria</taxon>
        <taxon>Pseudomonadati</taxon>
        <taxon>Pseudomonadota</taxon>
        <taxon>Gammaproteobacteria</taxon>
        <taxon>Enterobacterales</taxon>
        <taxon>Enterobacteriaceae</taxon>
        <taxon>Escherichia</taxon>
    </lineage>
</organism>
<sequence>MIALIQRVTRASVTVEGEVTGEIGAGLLVLLGVEKDDDEQKANRLCERVLGYRIFSDAEGKMNLNVQQAGGSVLVVSQFTLAADTERGMRPSFSKGASPDRAEALYDYFVERCRQQEMNTQTGRFAADMQVSLVNDGPVTFWLQV</sequence>
<feature type="chain" id="PRO_1000146195" description="D-aminoacyl-tRNA deacylase">
    <location>
        <begin position="1"/>
        <end position="145"/>
    </location>
</feature>
<feature type="short sequence motif" description="Gly-cisPro motif, important for rejection of L-amino acids" evidence="1">
    <location>
        <begin position="137"/>
        <end position="138"/>
    </location>
</feature>
<reference key="1">
    <citation type="journal article" date="2009" name="J. Bacteriol.">
        <title>Complete genome sequence and comparative genome analysis of enteropathogenic Escherichia coli O127:H6 strain E2348/69.</title>
        <authorList>
            <person name="Iguchi A."/>
            <person name="Thomson N.R."/>
            <person name="Ogura Y."/>
            <person name="Saunders D."/>
            <person name="Ooka T."/>
            <person name="Henderson I.R."/>
            <person name="Harris D."/>
            <person name="Asadulghani M."/>
            <person name="Kurokawa K."/>
            <person name="Dean P."/>
            <person name="Kenny B."/>
            <person name="Quail M.A."/>
            <person name="Thurston S."/>
            <person name="Dougan G."/>
            <person name="Hayashi T."/>
            <person name="Parkhill J."/>
            <person name="Frankel G."/>
        </authorList>
    </citation>
    <scope>NUCLEOTIDE SEQUENCE [LARGE SCALE GENOMIC DNA]</scope>
    <source>
        <strain>E2348/69 / EPEC</strain>
    </source>
</reference>